<gene>
    <name type="primary">16.7</name>
</gene>
<feature type="chain" id="PRO_0000106613" description="DNA replication protein 16.7">
    <location>
        <begin position="1"/>
        <end position="130"/>
    </location>
</feature>
<feature type="transmembrane region" description="Helical" evidence="1 7">
    <location>
        <begin position="1"/>
        <end position="20"/>
    </location>
</feature>
<feature type="region of interest" description="DNA-binding" evidence="7">
    <location>
        <begin position="70"/>
        <end position="130"/>
    </location>
</feature>
<feature type="coiled-coil region" evidence="1 7">
    <location>
        <begin position="30"/>
        <end position="60"/>
    </location>
</feature>
<feature type="site" description="Involved in dimerization" evidence="7">
    <location>
        <position position="113"/>
    </location>
</feature>
<feature type="site" description="Involved in dimerization" evidence="7">
    <location>
        <position position="116"/>
    </location>
</feature>
<feature type="site" description="Involved in oligomerization and DNA binding" evidence="7">
    <location>
        <position position="120"/>
    </location>
</feature>
<feature type="mutagenesis site" description="Loss of dimerization. Loss of DNA-binding activity." evidence="7">
    <original>W</original>
    <variation>A</variation>
    <location>
        <position position="116"/>
    </location>
</feature>
<feature type="mutagenesis site" description="No effect on dimerization, but unable to form higher order oligomers at elevated protein concentrations. Loss of DNA-binding activity." evidence="7">
    <original>N</original>
    <variation>W</variation>
    <location>
        <position position="120"/>
    </location>
</feature>
<feature type="helix" evidence="13">
    <location>
        <begin position="72"/>
        <end position="81"/>
    </location>
</feature>
<feature type="helix" evidence="13">
    <location>
        <begin position="88"/>
        <end position="95"/>
    </location>
</feature>
<feature type="helix" evidence="13">
    <location>
        <begin position="103"/>
        <end position="119"/>
    </location>
</feature>
<dbReference type="EMBL" id="M14430">
    <property type="protein sequence ID" value="AAA88352.1"/>
    <property type="molecule type" value="Genomic_DNA"/>
</dbReference>
<dbReference type="EMBL" id="EU771092">
    <property type="protein sequence ID" value="ACE96041.1"/>
    <property type="molecule type" value="Genomic_DNA"/>
</dbReference>
<dbReference type="PIR" id="JN0033">
    <property type="entry name" value="JN0033"/>
</dbReference>
<dbReference type="RefSeq" id="YP_002004547.1">
    <property type="nucleotide sequence ID" value="NC_011048.1"/>
</dbReference>
<dbReference type="PDB" id="1ZAE">
    <property type="method" value="NMR"/>
    <property type="chains" value="A/B=63-130"/>
</dbReference>
<dbReference type="PDB" id="2BNK">
    <property type="method" value="X-ray"/>
    <property type="resolution" value="2.90 A"/>
    <property type="chains" value="A/B=64-130"/>
</dbReference>
<dbReference type="PDB" id="2C5R">
    <property type="method" value="X-ray"/>
    <property type="resolution" value="2.90 A"/>
    <property type="chains" value="A/B/C/D/E/F=64-130"/>
</dbReference>
<dbReference type="PDBsum" id="1ZAE"/>
<dbReference type="PDBsum" id="2BNK"/>
<dbReference type="PDBsum" id="2C5R"/>
<dbReference type="SMR" id="P16517"/>
<dbReference type="GeneID" id="6446517"/>
<dbReference type="KEGG" id="vg:6446517"/>
<dbReference type="EvolutionaryTrace" id="P16517"/>
<dbReference type="Proteomes" id="UP000001207">
    <property type="component" value="Genome"/>
</dbReference>
<dbReference type="GO" id="GO:0033644">
    <property type="term" value="C:host cell membrane"/>
    <property type="evidence" value="ECO:0000314"/>
    <property type="project" value="UniProtKB"/>
</dbReference>
<dbReference type="GO" id="GO:0020002">
    <property type="term" value="C:host cell plasma membrane"/>
    <property type="evidence" value="ECO:0007669"/>
    <property type="project" value="UniProtKB-SubCell"/>
</dbReference>
<dbReference type="GO" id="GO:0016020">
    <property type="term" value="C:membrane"/>
    <property type="evidence" value="ECO:0007669"/>
    <property type="project" value="UniProtKB-KW"/>
</dbReference>
<dbReference type="GO" id="GO:0003677">
    <property type="term" value="F:DNA binding"/>
    <property type="evidence" value="ECO:0007669"/>
    <property type="project" value="UniProtKB-KW"/>
</dbReference>
<dbReference type="GO" id="GO:0006260">
    <property type="term" value="P:DNA replication"/>
    <property type="evidence" value="ECO:0007669"/>
    <property type="project" value="UniProtKB-KW"/>
</dbReference>
<dbReference type="GO" id="GO:0039693">
    <property type="term" value="P:viral DNA genome replication"/>
    <property type="evidence" value="ECO:0000314"/>
    <property type="project" value="UniProtKB"/>
</dbReference>
<dbReference type="Gene3D" id="1.10.8.600">
    <property type="entry name" value="Phage phi29 replication organiser protein p16.7-like"/>
    <property type="match status" value="1"/>
</dbReference>
<dbReference type="InterPro" id="IPR009595">
    <property type="entry name" value="Phage_DNA_replic_GP16.7"/>
</dbReference>
<dbReference type="InterPro" id="IPR037211">
    <property type="entry name" value="Phage_DNA_replic_GP16.7_sf"/>
</dbReference>
<dbReference type="Pfam" id="PF06720">
    <property type="entry name" value="Phi-29_GP16_7"/>
    <property type="match status" value="1"/>
</dbReference>
<dbReference type="SUPFAM" id="SSF140713">
    <property type="entry name" value="Phage replication organizer domain"/>
    <property type="match status" value="1"/>
</dbReference>
<sequence>MEAILMIGVLALCVIFLLSGRNNKKKQEARELEDYLEDLNKRVVQRTQILSELNEVISNRSIDKTVNLSACEVAVLDLYEQSNIRIPSDIIEDLVNQRLQSEQEVLNYIETQRTYWKLENQKKLYRGSLK</sequence>
<name>GP167_BPPH2</name>
<organismHost>
    <name type="scientific">Bacillus subtilis</name>
    <dbReference type="NCBI Taxonomy" id="1423"/>
</organismHost>
<keyword id="KW-0002">3D-structure</keyword>
<keyword id="KW-0175">Coiled coil</keyword>
<keyword id="KW-0235">DNA replication</keyword>
<keyword id="KW-0238">DNA-binding</keyword>
<keyword id="KW-0244">Early protein</keyword>
<keyword id="KW-1032">Host cell membrane</keyword>
<keyword id="KW-1043">Host membrane</keyword>
<keyword id="KW-0472">Membrane</keyword>
<keyword id="KW-1185">Reference proteome</keyword>
<keyword id="KW-0812">Transmembrane</keyword>
<keyword id="KW-1133">Transmembrane helix</keyword>
<keyword id="KW-1194">Viral DNA replication</keyword>
<protein>
    <recommendedName>
        <fullName>DNA replication protein 16.7</fullName>
    </recommendedName>
    <alternativeName>
        <fullName>Gene product 16.7</fullName>
        <shortName>gp16.7</shortName>
    </alternativeName>
    <alternativeName>
        <fullName>Protein p16.7</fullName>
    </alternativeName>
</protein>
<comment type="function">
    <text evidence="2 3 4 8">Binds to the long stretches of ssDNA of the viral DNA replication intermediates created during the protein-primed mechanism of replication of the viral genome and attaches the viral DNA to the membrane of the infected cells (PubMed:11169113, PubMed:11741949). Required for the redistribution of replicating viral DNA from the initial replication site to membrane-associated sites surrounding the nucleoid (PubMed:10921898). Required for the second pull step of DNA ejection (PubMed:17526715).</text>
</comment>
<comment type="subunit">
    <text evidence="3 5 6 7">Homodimer (PubMed:11169113, PubMed:17426023) (PubMed:15772069); homooligomer (PubMed:17426023). Interacts with DNA; one dsDNA binding subunit is constituted by three p16.7. dimers (PubMed:16275651, PubMed:17426023).</text>
</comment>
<comment type="subcellular location">
    <subcellularLocation>
        <location evidence="1 3">Host cell membrane</location>
        <topology evidence="1 3">Single-pass membrane protein</topology>
    </subcellularLocation>
</comment>
<comment type="induction">
    <text evidence="3">Expressed abundantly in the early phase of the viral replicative cycle, especially at early infection times.</text>
</comment>
<comment type="similarity">
    <text evidence="9">Belongs to the phi29likevirus gp16.7 family.</text>
</comment>
<organism>
    <name type="scientific">Bacillus phage phi29</name>
    <name type="common">Bacteriophage phi-29</name>
    <dbReference type="NCBI Taxonomy" id="2884424"/>
    <lineage>
        <taxon>Viruses</taxon>
        <taxon>Duplodnaviria</taxon>
        <taxon>Heunggongvirae</taxon>
        <taxon>Uroviricota</taxon>
        <taxon>Caudoviricetes</taxon>
        <taxon>Salasmaviridae</taxon>
        <taxon>Picovirinae</taxon>
        <taxon>Salasvirus</taxon>
        <taxon>Salasvirus phi29</taxon>
    </lineage>
</organism>
<evidence type="ECO:0000255" key="1"/>
<evidence type="ECO:0000269" key="2">
    <source>
    </source>
</evidence>
<evidence type="ECO:0000269" key="3">
    <source>
    </source>
</evidence>
<evidence type="ECO:0000269" key="4">
    <source>
    </source>
</evidence>
<evidence type="ECO:0000269" key="5">
    <source>
    </source>
</evidence>
<evidence type="ECO:0000269" key="6">
    <source>
    </source>
</evidence>
<evidence type="ECO:0000269" key="7">
    <source>
    </source>
</evidence>
<evidence type="ECO:0000269" key="8">
    <source>
    </source>
</evidence>
<evidence type="ECO:0000305" key="9"/>
<evidence type="ECO:0007744" key="10">
    <source>
        <dbReference type="PDB" id="1ZAE"/>
    </source>
</evidence>
<evidence type="ECO:0007744" key="11">
    <source>
        <dbReference type="PDB" id="2BNK"/>
    </source>
</evidence>
<evidence type="ECO:0007744" key="12">
    <source>
        <dbReference type="PDB" id="2C5R"/>
    </source>
</evidence>
<evidence type="ECO:0007829" key="13">
    <source>
        <dbReference type="PDB" id="2BNK"/>
    </source>
</evidence>
<reference key="1">
    <citation type="journal article" date="1985" name="Gene">
        <title>The complete sequence of the Bacillus phage phi 29 right early region.</title>
        <authorList>
            <person name="Garvey K.J."/>
            <person name="Yoshikawa H."/>
            <person name="Ito J."/>
        </authorList>
    </citation>
    <scope>NUCLEOTIDE SEQUENCE [GENOMIC DNA]</scope>
</reference>
<reference key="2">
    <citation type="submission" date="2008-05" db="EMBL/GenBank/DDBJ databases">
        <authorList>
            <person name="Villegas A.P."/>
            <person name="Lingohr E.J."/>
            <person name="Ceyssens P.-J."/>
            <person name="Kropinski A.M."/>
        </authorList>
    </citation>
    <scope>NUCLEOTIDE SEQUENCE [GENOMIC DNA]</scope>
</reference>
<reference key="3">
    <citation type="journal article" date="2000" name="EMBO J.">
        <title>Dynamic relocalization of phage phi 29 DNA during replication and the role of the viral protein p16.7.</title>
        <authorList>
            <person name="Meijer W.J."/>
            <person name="Lewis P.J."/>
            <person name="Errington J."/>
            <person name="Salas M."/>
        </authorList>
    </citation>
    <scope>FUNCTION</scope>
</reference>
<reference key="4">
    <citation type="journal article" date="2001" name="Mol. Microbiol.">
        <title>Characterization of the bacteriophage phi29-encoded protein p16.7: a membrane protein involved in phage DNA replication.</title>
        <authorList>
            <person name="Meijer W.J."/>
            <person name="Serna-Rico A."/>
            <person name="Salas M."/>
        </authorList>
    </citation>
    <scope>CHARACTERIZATION</scope>
    <scope>INDUCTION</scope>
    <scope>FUNCTION</scope>
    <scope>SUBCELLULAR LOCATION</scope>
    <scope>SUBUNIT</scope>
</reference>
<reference key="5">
    <citation type="journal article" date="2002" name="J. Biol. Chem.">
        <title>The Bacillus subtilis phage phi 29 protein p16.7, involved in phi 29 DNA replication, is a membrane-localized single-stranded DNA-binding protein.</title>
        <authorList>
            <person name="Serna-Rico A."/>
            <person name="Salas M."/>
            <person name="Meijer W.J."/>
        </authorList>
    </citation>
    <scope>DNA-BINDING</scope>
    <scope>FUNCTION</scope>
</reference>
<reference key="6">
    <citation type="journal article" date="2007" name="J. Bacteriol.">
        <title>The phage phi29 membrane protein p16.7, involved in DNA replication, is required for efficient ejection of the viral genome.</title>
        <authorList>
            <person name="Alcorlo M."/>
            <person name="Gonzalez-Huici V."/>
            <person name="Hermoso J.M."/>
            <person name="Meijer W.J."/>
            <person name="Salas M."/>
        </authorList>
    </citation>
    <scope>FUNCTION</scope>
</reference>
<reference key="7">
    <citation type="journal article" date="2007" name="J. Biol. Chem.">
        <title>Structural and functional analysis of phi29 p16.7C dimerization mutants: identification of a novel aromatic cage dimerization motif.</title>
        <authorList>
            <person name="Munoz-Espin D."/>
            <person name="Fuertes M.A."/>
            <person name="Jimenez M."/>
            <person name="Villar L."/>
            <person name="Alonso C."/>
            <person name="Rivas G."/>
            <person name="Salas M."/>
            <person name="Meijer W.J."/>
        </authorList>
    </citation>
    <scope>SUBUNIT</scope>
    <scope>DNA-BINDING</scope>
    <scope>MUTAGENESIS OF TRP-116 AND ASN-120</scope>
</reference>
<reference evidence="10 11" key="8">
    <citation type="journal article" date="2005" name="J. Biol. Chem.">
        <title>Structure of the functional domain of phi29 replication organizer: insights into oligomerization and dna binding.</title>
        <authorList>
            <person name="Asensio J.L."/>
            <person name="Albert A."/>
            <person name="Munoz-Espin D."/>
            <person name="Gonzalez C."/>
            <person name="Hermoso J."/>
            <person name="Villar L."/>
            <person name="Jimenez-Barbero J."/>
            <person name="Salas M."/>
            <person name="Meijer W.J."/>
        </authorList>
    </citation>
    <scope>STRUCTURE BY NMR OF 63-130</scope>
    <scope>SUBUNIT</scope>
</reference>
<reference evidence="12" key="9">
    <citation type="journal article" date="2005" name="J. Biol. Chem.">
        <title>Structural basis for membrane anchorage of viral phi29 DNA during replication.</title>
        <authorList>
            <person name="Albert A."/>
            <person name="Munoz-Espin D."/>
            <person name="Jimenez M."/>
            <person name="Asensio J.L."/>
            <person name="Hermoso J.A."/>
            <person name="Salas M."/>
            <person name="Meijer W.J."/>
        </authorList>
    </citation>
    <scope>X-RAY CRYSTALLOGRAPHY (2.90 ANGSTROMS) OF 64-130 IN COMPLEX WITH DNA</scope>
    <scope>DNA-BINDING</scope>
</reference>
<accession>P16517</accession>
<accession>B3VMQ4</accession>
<proteinExistence type="evidence at protein level"/>